<keyword id="KW-0007">Acetylation</keyword>
<keyword id="KW-0150">Chloroplast</keyword>
<keyword id="KW-0934">Plastid</keyword>
<keyword id="KW-1185">Reference proteome</keyword>
<keyword id="KW-0809">Transit peptide</keyword>
<accession>Q93WI0</accession>
<accession>O23727</accession>
<accession>Q8LCM5</accession>
<feature type="transit peptide" description="Chloroplast" evidence="4">
    <location>
        <begin position="1"/>
        <end position="81"/>
    </location>
</feature>
<feature type="chain" id="PRO_0000416534" description="Rhodanese-like/PpiC domain-containing protein 12, chloroplastic">
    <location>
        <begin position="82"/>
        <end position="299"/>
    </location>
</feature>
<feature type="domain" description="PpiC" evidence="2">
    <location>
        <begin position="93"/>
        <end position="183"/>
    </location>
</feature>
<feature type="domain" description="Rhodanese" evidence="1">
    <location>
        <begin position="205"/>
        <end position="297"/>
    </location>
</feature>
<feature type="active site" description="Cysteine persulfide intermediate" evidence="1">
    <location>
        <position position="257"/>
    </location>
</feature>
<feature type="modified residue" description="N-acetylserine" evidence="4">
    <location>
        <position position="82"/>
    </location>
</feature>
<feature type="sequence conflict" description="In Ref. 5; AAM63512." evidence="3" ref="5">
    <original>T</original>
    <variation>A</variation>
    <location>
        <position position="5"/>
    </location>
</feature>
<feature type="sequence conflict" description="In Ref. 5; AAM63512." evidence="3" ref="5">
    <original>N</original>
    <variation>D</variation>
    <location>
        <position position="106"/>
    </location>
</feature>
<feature type="sequence conflict" description="In Ref. 5; AAM63512." evidence="3" ref="5">
    <original>N</original>
    <variation>D</variation>
    <location>
        <position position="165"/>
    </location>
</feature>
<feature type="sequence conflict" description="In Ref. 5; AAM63512." evidence="3" ref="5">
    <original>T</original>
    <variation>S</variation>
    <location>
        <position position="298"/>
    </location>
</feature>
<sequence>MFRVTGTLSAASSPAVAAASFSAALRLSITPTLAIASPPHLRWFSKFSRQFLGGRISSLRPRIPSPCPIRLSGFPALKMRASFSSGSSGSSASREILVQHLLVKNNDVELFAELQKKFLDGEEMSDLAAEYSICPSKKDGGILGWVKLGQMVPEFEEAAFKAELNQVVRCRTQFGLHLLQVLSEREPVKDIQVEELHSKMQDPVFMDEAQLIDVREPNEIEIASLPGFKVFPLRQFGTWAPDITSKLNPEKDTFVLCKVGGRSMQVANWLQSQGFKSVYNITGGIQAYSLKVDPSIPTY</sequence>
<gene>
    <name type="ordered locus">At5g19370</name>
    <name type="ORF">F7K24.120</name>
</gene>
<evidence type="ECO:0000255" key="1">
    <source>
        <dbReference type="PROSITE-ProRule" id="PRU00173"/>
    </source>
</evidence>
<evidence type="ECO:0000255" key="2">
    <source>
        <dbReference type="PROSITE-ProRule" id="PRU00278"/>
    </source>
</evidence>
<evidence type="ECO:0000305" key="3"/>
<evidence type="ECO:0007744" key="4">
    <source>
    </source>
</evidence>
<name>STR12_ARATH</name>
<reference key="1">
    <citation type="journal article" date="1997" name="Proc. Natl. Acad. Sci. U.S.A.">
        <title>Efficient gene tagging in Arabidopsis thaliana using a gene trap approach.</title>
        <authorList>
            <person name="Babiychuk E."/>
            <person name="Fuangthong M."/>
            <person name="Van Montagu M."/>
            <person name="Inze D."/>
            <person name="Kushnir S."/>
        </authorList>
    </citation>
    <scope>NUCLEOTIDE SEQUENCE [MRNA]</scope>
    <source>
        <strain>cv. Columbia</strain>
        <tissue>Leaf</tissue>
    </source>
</reference>
<reference key="2">
    <citation type="journal article" date="2000" name="Nature">
        <title>Sequence and analysis of chromosome 5 of the plant Arabidopsis thaliana.</title>
        <authorList>
            <person name="Tabata S."/>
            <person name="Kaneko T."/>
            <person name="Nakamura Y."/>
            <person name="Kotani H."/>
            <person name="Kato T."/>
            <person name="Asamizu E."/>
            <person name="Miyajima N."/>
            <person name="Sasamoto S."/>
            <person name="Kimura T."/>
            <person name="Hosouchi T."/>
            <person name="Kawashima K."/>
            <person name="Kohara M."/>
            <person name="Matsumoto M."/>
            <person name="Matsuno A."/>
            <person name="Muraki A."/>
            <person name="Nakayama S."/>
            <person name="Nakazaki N."/>
            <person name="Naruo K."/>
            <person name="Okumura S."/>
            <person name="Shinpo S."/>
            <person name="Takeuchi C."/>
            <person name="Wada T."/>
            <person name="Watanabe A."/>
            <person name="Yamada M."/>
            <person name="Yasuda M."/>
            <person name="Sato S."/>
            <person name="de la Bastide M."/>
            <person name="Huang E."/>
            <person name="Spiegel L."/>
            <person name="Gnoj L."/>
            <person name="O'Shaughnessy A."/>
            <person name="Preston R."/>
            <person name="Habermann K."/>
            <person name="Murray J."/>
            <person name="Johnson D."/>
            <person name="Rohlfing T."/>
            <person name="Nelson J."/>
            <person name="Stoneking T."/>
            <person name="Pepin K."/>
            <person name="Spieth J."/>
            <person name="Sekhon M."/>
            <person name="Armstrong J."/>
            <person name="Becker M."/>
            <person name="Belter E."/>
            <person name="Cordum H."/>
            <person name="Cordes M."/>
            <person name="Courtney L."/>
            <person name="Courtney W."/>
            <person name="Dante M."/>
            <person name="Du H."/>
            <person name="Edwards J."/>
            <person name="Fryman J."/>
            <person name="Haakensen B."/>
            <person name="Lamar E."/>
            <person name="Latreille P."/>
            <person name="Leonard S."/>
            <person name="Meyer R."/>
            <person name="Mulvaney E."/>
            <person name="Ozersky P."/>
            <person name="Riley A."/>
            <person name="Strowmatt C."/>
            <person name="Wagner-McPherson C."/>
            <person name="Wollam A."/>
            <person name="Yoakum M."/>
            <person name="Bell M."/>
            <person name="Dedhia N."/>
            <person name="Parnell L."/>
            <person name="Shah R."/>
            <person name="Rodriguez M."/>
            <person name="Hoon See L."/>
            <person name="Vil D."/>
            <person name="Baker J."/>
            <person name="Kirchoff K."/>
            <person name="Toth K."/>
            <person name="King L."/>
            <person name="Bahret A."/>
            <person name="Miller B."/>
            <person name="Marra M.A."/>
            <person name="Martienssen R."/>
            <person name="McCombie W.R."/>
            <person name="Wilson R.K."/>
            <person name="Murphy G."/>
            <person name="Bancroft I."/>
            <person name="Volckaert G."/>
            <person name="Wambutt R."/>
            <person name="Duesterhoeft A."/>
            <person name="Stiekema W."/>
            <person name="Pohl T."/>
            <person name="Entian K.-D."/>
            <person name="Terryn N."/>
            <person name="Hartley N."/>
            <person name="Bent E."/>
            <person name="Johnson S."/>
            <person name="Langham S.-A."/>
            <person name="McCullagh B."/>
            <person name="Robben J."/>
            <person name="Grymonprez B."/>
            <person name="Zimmermann W."/>
            <person name="Ramsperger U."/>
            <person name="Wedler H."/>
            <person name="Balke K."/>
            <person name="Wedler E."/>
            <person name="Peters S."/>
            <person name="van Staveren M."/>
            <person name="Dirkse W."/>
            <person name="Mooijman P."/>
            <person name="Klein Lankhorst R."/>
            <person name="Weitzenegger T."/>
            <person name="Bothe G."/>
            <person name="Rose M."/>
            <person name="Hauf J."/>
            <person name="Berneiser S."/>
            <person name="Hempel S."/>
            <person name="Feldpausch M."/>
            <person name="Lamberth S."/>
            <person name="Villarroel R."/>
            <person name="Gielen J."/>
            <person name="Ardiles W."/>
            <person name="Bents O."/>
            <person name="Lemcke K."/>
            <person name="Kolesov G."/>
            <person name="Mayer K.F.X."/>
            <person name="Rudd S."/>
            <person name="Schoof H."/>
            <person name="Schueller C."/>
            <person name="Zaccaria P."/>
            <person name="Mewes H.-W."/>
            <person name="Bevan M."/>
            <person name="Fransz P.F."/>
        </authorList>
    </citation>
    <scope>NUCLEOTIDE SEQUENCE [LARGE SCALE GENOMIC DNA]</scope>
    <source>
        <strain>cv. Columbia</strain>
    </source>
</reference>
<reference key="3">
    <citation type="journal article" date="2017" name="Plant J.">
        <title>Araport11: a complete reannotation of the Arabidopsis thaliana reference genome.</title>
        <authorList>
            <person name="Cheng C.Y."/>
            <person name="Krishnakumar V."/>
            <person name="Chan A.P."/>
            <person name="Thibaud-Nissen F."/>
            <person name="Schobel S."/>
            <person name="Town C.D."/>
        </authorList>
    </citation>
    <scope>GENOME REANNOTATION</scope>
    <source>
        <strain>cv. Columbia</strain>
    </source>
</reference>
<reference key="4">
    <citation type="journal article" date="2003" name="Science">
        <title>Empirical analysis of transcriptional activity in the Arabidopsis genome.</title>
        <authorList>
            <person name="Yamada K."/>
            <person name="Lim J."/>
            <person name="Dale J.M."/>
            <person name="Chen H."/>
            <person name="Shinn P."/>
            <person name="Palm C.J."/>
            <person name="Southwick A.M."/>
            <person name="Wu H.C."/>
            <person name="Kim C.J."/>
            <person name="Nguyen M."/>
            <person name="Pham P.K."/>
            <person name="Cheuk R.F."/>
            <person name="Karlin-Newmann G."/>
            <person name="Liu S.X."/>
            <person name="Lam B."/>
            <person name="Sakano H."/>
            <person name="Wu T."/>
            <person name="Yu G."/>
            <person name="Miranda M."/>
            <person name="Quach H.L."/>
            <person name="Tripp M."/>
            <person name="Chang C.H."/>
            <person name="Lee J.M."/>
            <person name="Toriumi M.J."/>
            <person name="Chan M.M."/>
            <person name="Tang C.C."/>
            <person name="Onodera C.S."/>
            <person name="Deng J.M."/>
            <person name="Akiyama K."/>
            <person name="Ansari Y."/>
            <person name="Arakawa T."/>
            <person name="Banh J."/>
            <person name="Banno F."/>
            <person name="Bowser L."/>
            <person name="Brooks S.Y."/>
            <person name="Carninci P."/>
            <person name="Chao Q."/>
            <person name="Choy N."/>
            <person name="Enju A."/>
            <person name="Goldsmith A.D."/>
            <person name="Gurjal M."/>
            <person name="Hansen N.F."/>
            <person name="Hayashizaki Y."/>
            <person name="Johnson-Hopson C."/>
            <person name="Hsuan V.W."/>
            <person name="Iida K."/>
            <person name="Karnes M."/>
            <person name="Khan S."/>
            <person name="Koesema E."/>
            <person name="Ishida J."/>
            <person name="Jiang P.X."/>
            <person name="Jones T."/>
            <person name="Kawai J."/>
            <person name="Kamiya A."/>
            <person name="Meyers C."/>
            <person name="Nakajima M."/>
            <person name="Narusaka M."/>
            <person name="Seki M."/>
            <person name="Sakurai T."/>
            <person name="Satou M."/>
            <person name="Tamse R."/>
            <person name="Vaysberg M."/>
            <person name="Wallender E.K."/>
            <person name="Wong C."/>
            <person name="Yamamura Y."/>
            <person name="Yuan S."/>
            <person name="Shinozaki K."/>
            <person name="Davis R.W."/>
            <person name="Theologis A."/>
            <person name="Ecker J.R."/>
        </authorList>
    </citation>
    <scope>NUCLEOTIDE SEQUENCE [LARGE SCALE MRNA]</scope>
    <source>
        <strain>cv. Columbia</strain>
    </source>
</reference>
<reference key="5">
    <citation type="submission" date="2002-03" db="EMBL/GenBank/DDBJ databases">
        <title>Full-length cDNA from Arabidopsis thaliana.</title>
        <authorList>
            <person name="Brover V.V."/>
            <person name="Troukhan M.E."/>
            <person name="Alexandrov N.A."/>
            <person name="Lu Y.-P."/>
            <person name="Flavell R.B."/>
            <person name="Feldmann K.A."/>
        </authorList>
    </citation>
    <scope>NUCLEOTIDE SEQUENCE [LARGE SCALE MRNA]</scope>
</reference>
<reference key="6">
    <citation type="journal article" date="2007" name="Plant Physiol. Biochem.">
        <title>Differential expression of Arabidopsis sulfurtransferases under various growth conditions.</title>
        <authorList>
            <person name="Bartels A."/>
            <person name="Mock H.P."/>
            <person name="Papenbrock J."/>
        </authorList>
    </citation>
    <scope>GENE FAMILY</scope>
    <scope>NOMENCLATURE</scope>
</reference>
<reference key="7">
    <citation type="journal article" date="2012" name="Mol. Cell. Proteomics">
        <title>Comparative large-scale characterisation of plant vs. mammal proteins reveals similar and idiosyncratic N-alpha acetylation features.</title>
        <authorList>
            <person name="Bienvenut W.V."/>
            <person name="Sumpton D."/>
            <person name="Martinez A."/>
            <person name="Lilla S."/>
            <person name="Espagne C."/>
            <person name="Meinnel T."/>
            <person name="Giglione C."/>
        </authorList>
    </citation>
    <scope>ACETYLATION [LARGE SCALE ANALYSIS] AT SER-82</scope>
    <scope>CLEAVAGE OF TRANSIT PEPTIDE [LARGE SCALE ANALYSIS] AFTER ALA-81</scope>
    <scope>IDENTIFICATION BY MASS SPECTROMETRY [LARGE SCALE ANALYSIS]</scope>
</reference>
<dbReference type="EMBL" id="Z86095">
    <property type="protein sequence ID" value="CAB06699.1"/>
    <property type="status" value="ALT_SEQ"/>
    <property type="molecule type" value="mRNA"/>
</dbReference>
<dbReference type="EMBL" id="AF296837">
    <property type="status" value="NOT_ANNOTATED_CDS"/>
    <property type="molecule type" value="Genomic_DNA"/>
</dbReference>
<dbReference type="EMBL" id="CP002688">
    <property type="protein sequence ID" value="AED92692.1"/>
    <property type="molecule type" value="Genomic_DNA"/>
</dbReference>
<dbReference type="EMBL" id="AF370165">
    <property type="protein sequence ID" value="AAK43980.1"/>
    <property type="molecule type" value="mRNA"/>
</dbReference>
<dbReference type="EMBL" id="AY059127">
    <property type="protein sequence ID" value="AAL15233.1"/>
    <property type="molecule type" value="mRNA"/>
</dbReference>
<dbReference type="EMBL" id="AY086512">
    <property type="protein sequence ID" value="AAM63512.1"/>
    <property type="molecule type" value="mRNA"/>
</dbReference>
<dbReference type="PIR" id="T52622">
    <property type="entry name" value="T52622"/>
</dbReference>
<dbReference type="RefSeq" id="NP_568372.1">
    <property type="nucleotide sequence ID" value="NM_121942.5"/>
</dbReference>
<dbReference type="SMR" id="Q93WI0"/>
<dbReference type="FunCoup" id="Q93WI0">
    <property type="interactions" value="1566"/>
</dbReference>
<dbReference type="STRING" id="3702.Q93WI0"/>
<dbReference type="iPTMnet" id="Q93WI0"/>
<dbReference type="PaxDb" id="3702-AT5G19370.1"/>
<dbReference type="ProteomicsDB" id="245223"/>
<dbReference type="EnsemblPlants" id="AT5G19370.1">
    <property type="protein sequence ID" value="AT5G19370.1"/>
    <property type="gene ID" value="AT5G19370"/>
</dbReference>
<dbReference type="GeneID" id="832057"/>
<dbReference type="Gramene" id="AT5G19370.1">
    <property type="protein sequence ID" value="AT5G19370.1"/>
    <property type="gene ID" value="AT5G19370"/>
</dbReference>
<dbReference type="KEGG" id="ath:AT5G19370"/>
<dbReference type="Araport" id="AT5G19370"/>
<dbReference type="TAIR" id="AT5G19370"/>
<dbReference type="eggNOG" id="KOG2017">
    <property type="taxonomic scope" value="Eukaryota"/>
</dbReference>
<dbReference type="HOGENOM" id="CLU_056271_0_0_1"/>
<dbReference type="InParanoid" id="Q93WI0"/>
<dbReference type="OMA" id="MQDPSFF"/>
<dbReference type="OrthoDB" id="1911748at2759"/>
<dbReference type="PhylomeDB" id="Q93WI0"/>
<dbReference type="PRO" id="PR:Q93WI0"/>
<dbReference type="Proteomes" id="UP000006548">
    <property type="component" value="Chromosome 5"/>
</dbReference>
<dbReference type="ExpressionAtlas" id="Q93WI0">
    <property type="expression patterns" value="baseline and differential"/>
</dbReference>
<dbReference type="GO" id="GO:0009507">
    <property type="term" value="C:chloroplast"/>
    <property type="evidence" value="ECO:0007005"/>
    <property type="project" value="TAIR"/>
</dbReference>
<dbReference type="GO" id="GO:0003755">
    <property type="term" value="F:peptidyl-prolyl cis-trans isomerase activity"/>
    <property type="evidence" value="ECO:0007669"/>
    <property type="project" value="InterPro"/>
</dbReference>
<dbReference type="CDD" id="cd01528">
    <property type="entry name" value="RHOD_2"/>
    <property type="match status" value="1"/>
</dbReference>
<dbReference type="Gene3D" id="3.10.50.40">
    <property type="match status" value="1"/>
</dbReference>
<dbReference type="Gene3D" id="3.40.250.10">
    <property type="entry name" value="Rhodanese-like domain"/>
    <property type="match status" value="1"/>
</dbReference>
<dbReference type="InterPro" id="IPR046357">
    <property type="entry name" value="PPIase_dom_sf"/>
</dbReference>
<dbReference type="InterPro" id="IPR000297">
    <property type="entry name" value="PPIase_PpiC"/>
</dbReference>
<dbReference type="InterPro" id="IPR052204">
    <property type="entry name" value="PpiC/parvulin_rotamase"/>
</dbReference>
<dbReference type="InterPro" id="IPR001763">
    <property type="entry name" value="Rhodanese-like_dom"/>
</dbReference>
<dbReference type="InterPro" id="IPR036873">
    <property type="entry name" value="Rhodanese-like_dom_sf"/>
</dbReference>
<dbReference type="PANTHER" id="PTHR43629">
    <property type="entry name" value="PEPTIDYL-PROLYL CIS-TRANS ISOMERASE"/>
    <property type="match status" value="1"/>
</dbReference>
<dbReference type="PANTHER" id="PTHR43629:SF2">
    <property type="entry name" value="RHODANESE-LIKE_PPIC DOMAIN-CONTAINING PROTEIN 12, CHLOROPLASTIC"/>
    <property type="match status" value="1"/>
</dbReference>
<dbReference type="Pfam" id="PF00581">
    <property type="entry name" value="Rhodanese"/>
    <property type="match status" value="1"/>
</dbReference>
<dbReference type="Pfam" id="PF13616">
    <property type="entry name" value="Rotamase_3"/>
    <property type="match status" value="1"/>
</dbReference>
<dbReference type="SMART" id="SM00450">
    <property type="entry name" value="RHOD"/>
    <property type="match status" value="1"/>
</dbReference>
<dbReference type="SUPFAM" id="SSF54534">
    <property type="entry name" value="FKBP-like"/>
    <property type="match status" value="1"/>
</dbReference>
<dbReference type="SUPFAM" id="SSF52821">
    <property type="entry name" value="Rhodanese/Cell cycle control phosphatase"/>
    <property type="match status" value="1"/>
</dbReference>
<dbReference type="PROSITE" id="PS50198">
    <property type="entry name" value="PPIC_PPIASE_2"/>
    <property type="match status" value="1"/>
</dbReference>
<dbReference type="PROSITE" id="PS50206">
    <property type="entry name" value="RHODANESE_3"/>
    <property type="match status" value="1"/>
</dbReference>
<protein>
    <recommendedName>
        <fullName>Rhodanese-like/PpiC domain-containing protein 12, chloroplastic</fullName>
    </recommendedName>
    <alternativeName>
        <fullName>Sulfurtransferase 12</fullName>
        <shortName>AtStr12</shortName>
    </alternativeName>
</protein>
<proteinExistence type="evidence at protein level"/>
<organism>
    <name type="scientific">Arabidopsis thaliana</name>
    <name type="common">Mouse-ear cress</name>
    <dbReference type="NCBI Taxonomy" id="3702"/>
    <lineage>
        <taxon>Eukaryota</taxon>
        <taxon>Viridiplantae</taxon>
        <taxon>Streptophyta</taxon>
        <taxon>Embryophyta</taxon>
        <taxon>Tracheophyta</taxon>
        <taxon>Spermatophyta</taxon>
        <taxon>Magnoliopsida</taxon>
        <taxon>eudicotyledons</taxon>
        <taxon>Gunneridae</taxon>
        <taxon>Pentapetalae</taxon>
        <taxon>rosids</taxon>
        <taxon>malvids</taxon>
        <taxon>Brassicales</taxon>
        <taxon>Brassicaceae</taxon>
        <taxon>Camelineae</taxon>
        <taxon>Arabidopsis</taxon>
    </lineage>
</organism>
<comment type="subcellular location">
    <subcellularLocation>
        <location evidence="3">Plastid</location>
        <location evidence="3">Chloroplast</location>
    </subcellularLocation>
</comment>
<comment type="sequence caution" evidence="3">
    <conflict type="miscellaneous discrepancy">
        <sequence resource="EMBL-CDS" id="CAB06699"/>
    </conflict>
    <text>Sequencing errors.</text>
</comment>